<evidence type="ECO:0000255" key="1">
    <source>
        <dbReference type="HAMAP-Rule" id="MF_00469"/>
    </source>
</evidence>
<evidence type="ECO:0000256" key="2">
    <source>
        <dbReference type="SAM" id="MobiDB-lite"/>
    </source>
</evidence>
<gene>
    <name evidence="1" type="primary">trhO</name>
    <name type="ordered locus">FTN_0789</name>
</gene>
<comment type="function">
    <text evidence="1">Catalyzes oxygen-dependent 5-hydroxyuridine (ho5U) modification at position 34 in tRNAs.</text>
</comment>
<comment type="catalytic activity">
    <reaction evidence="1">
        <text>uridine(34) in tRNA + AH2 + O2 = 5-hydroxyuridine(34) in tRNA + A + H2O</text>
        <dbReference type="Rhea" id="RHEA:64224"/>
        <dbReference type="Rhea" id="RHEA-COMP:11727"/>
        <dbReference type="Rhea" id="RHEA-COMP:13381"/>
        <dbReference type="ChEBI" id="CHEBI:13193"/>
        <dbReference type="ChEBI" id="CHEBI:15377"/>
        <dbReference type="ChEBI" id="CHEBI:15379"/>
        <dbReference type="ChEBI" id="CHEBI:17499"/>
        <dbReference type="ChEBI" id="CHEBI:65315"/>
        <dbReference type="ChEBI" id="CHEBI:136877"/>
    </reaction>
</comment>
<comment type="similarity">
    <text evidence="1">Belongs to the TrhO family.</text>
</comment>
<accession>A0Q614</accession>
<sequence>MSQIVVCAMYKFVTLEDFEAMRQPLLDTMIKNNVKGTLLLANEGINGTVAGTRESIDNLLAYLKSDPRLVDIDYKESYHQEMPFYRSKVKLKKEIVTLGVDEIDPNKICGKYVEPKDWNDLISDPETVLIDTRNEYEIEIGTFKNAINPHTENFREFPQYVDENLDPKKHKKVAMFCTGGIRCEKSTALLKAKGFDEVYHLKGGILKYLEEVPKEKSMWQGECFVFDSRVAVNHDLEKGNYDQCFACRMPITEDDKKRPEYVKGISCHHCYDKVTEKQKARFAEREKQSQLAAEKGFSHIGDEAKKLAQLNKQKKQQAKEAARKKTEKN</sequence>
<keyword id="KW-0560">Oxidoreductase</keyword>
<keyword id="KW-0819">tRNA processing</keyword>
<dbReference type="EC" id="1.14.-.-" evidence="1"/>
<dbReference type="EMBL" id="CP000439">
    <property type="protein sequence ID" value="ABK89679.1"/>
    <property type="molecule type" value="Genomic_DNA"/>
</dbReference>
<dbReference type="RefSeq" id="WP_003038976.1">
    <property type="nucleotide sequence ID" value="NC_008601.1"/>
</dbReference>
<dbReference type="SMR" id="A0Q614"/>
<dbReference type="KEGG" id="ftn:FTN_0789"/>
<dbReference type="KEGG" id="ftx:AW25_1231"/>
<dbReference type="BioCyc" id="FTUL401614:G1G75-823-MONOMER"/>
<dbReference type="Proteomes" id="UP000000762">
    <property type="component" value="Chromosome"/>
</dbReference>
<dbReference type="GO" id="GO:0016705">
    <property type="term" value="F:oxidoreductase activity, acting on paired donors, with incorporation or reduction of molecular oxygen"/>
    <property type="evidence" value="ECO:0007669"/>
    <property type="project" value="UniProtKB-UniRule"/>
</dbReference>
<dbReference type="GO" id="GO:0006400">
    <property type="term" value="P:tRNA modification"/>
    <property type="evidence" value="ECO:0007669"/>
    <property type="project" value="UniProtKB-UniRule"/>
</dbReference>
<dbReference type="CDD" id="cd01518">
    <property type="entry name" value="RHOD_YceA"/>
    <property type="match status" value="1"/>
</dbReference>
<dbReference type="Gene3D" id="3.30.70.100">
    <property type="match status" value="1"/>
</dbReference>
<dbReference type="Gene3D" id="3.40.250.10">
    <property type="entry name" value="Rhodanese-like domain"/>
    <property type="match status" value="1"/>
</dbReference>
<dbReference type="HAMAP" id="MF_00469">
    <property type="entry name" value="TrhO"/>
    <property type="match status" value="1"/>
</dbReference>
<dbReference type="InterPro" id="IPR001763">
    <property type="entry name" value="Rhodanese-like_dom"/>
</dbReference>
<dbReference type="InterPro" id="IPR036873">
    <property type="entry name" value="Rhodanese-like_dom_sf"/>
</dbReference>
<dbReference type="InterPro" id="IPR020936">
    <property type="entry name" value="TrhO"/>
</dbReference>
<dbReference type="InterPro" id="IPR040503">
    <property type="entry name" value="TRHO_N"/>
</dbReference>
<dbReference type="NCBIfam" id="NF001136">
    <property type="entry name" value="PRK00142.1-4"/>
    <property type="match status" value="1"/>
</dbReference>
<dbReference type="PANTHER" id="PTHR43268:SF3">
    <property type="entry name" value="RHODANESE-LIKE DOMAIN-CONTAINING PROTEIN 7-RELATED"/>
    <property type="match status" value="1"/>
</dbReference>
<dbReference type="PANTHER" id="PTHR43268">
    <property type="entry name" value="THIOSULFATE SULFURTRANSFERASE/RHODANESE-LIKE DOMAIN-CONTAINING PROTEIN 2"/>
    <property type="match status" value="1"/>
</dbReference>
<dbReference type="Pfam" id="PF00581">
    <property type="entry name" value="Rhodanese"/>
    <property type="match status" value="1"/>
</dbReference>
<dbReference type="Pfam" id="PF17773">
    <property type="entry name" value="UPF0176_N"/>
    <property type="match status" value="1"/>
</dbReference>
<dbReference type="SMART" id="SM00450">
    <property type="entry name" value="RHOD"/>
    <property type="match status" value="1"/>
</dbReference>
<dbReference type="SUPFAM" id="SSF52821">
    <property type="entry name" value="Rhodanese/Cell cycle control phosphatase"/>
    <property type="match status" value="1"/>
</dbReference>
<dbReference type="PROSITE" id="PS50206">
    <property type="entry name" value="RHODANESE_3"/>
    <property type="match status" value="1"/>
</dbReference>
<proteinExistence type="inferred from homology"/>
<name>TRHO_FRATN</name>
<organism>
    <name type="scientific">Francisella tularensis subsp. novicida (strain U112)</name>
    <dbReference type="NCBI Taxonomy" id="401614"/>
    <lineage>
        <taxon>Bacteria</taxon>
        <taxon>Pseudomonadati</taxon>
        <taxon>Pseudomonadota</taxon>
        <taxon>Gammaproteobacteria</taxon>
        <taxon>Thiotrichales</taxon>
        <taxon>Francisellaceae</taxon>
        <taxon>Francisella</taxon>
    </lineage>
</organism>
<protein>
    <recommendedName>
        <fullName evidence="1">tRNA uridine(34) hydroxylase</fullName>
        <ecNumber evidence="1">1.14.-.-</ecNumber>
    </recommendedName>
    <alternativeName>
        <fullName evidence="1">tRNA hydroxylation protein O</fullName>
    </alternativeName>
</protein>
<reference key="1">
    <citation type="journal article" date="2007" name="Genome Biol.">
        <title>Comparison of Francisella tularensis genomes reveals evolutionary events associated with the emergence of human pathogenic strains.</title>
        <authorList>
            <person name="Rohmer L."/>
            <person name="Fong C."/>
            <person name="Abmayr S."/>
            <person name="Wasnick M."/>
            <person name="Larson Freeman T.J."/>
            <person name="Radey M."/>
            <person name="Guina T."/>
            <person name="Svensson K."/>
            <person name="Hayden H.S."/>
            <person name="Jacobs M."/>
            <person name="Gallagher L.A."/>
            <person name="Manoil C."/>
            <person name="Ernst R.K."/>
            <person name="Drees B."/>
            <person name="Buckley D."/>
            <person name="Haugen E."/>
            <person name="Bovee D."/>
            <person name="Zhou Y."/>
            <person name="Chang J."/>
            <person name="Levy R."/>
            <person name="Lim R."/>
            <person name="Gillett W."/>
            <person name="Guenthener D."/>
            <person name="Kang A."/>
            <person name="Shaffer S.A."/>
            <person name="Taylor G."/>
            <person name="Chen J."/>
            <person name="Gallis B."/>
            <person name="D'Argenio D.A."/>
            <person name="Forsman M."/>
            <person name="Olson M.V."/>
            <person name="Goodlett D.R."/>
            <person name="Kaul R."/>
            <person name="Miller S.I."/>
            <person name="Brittnacher M.J."/>
        </authorList>
    </citation>
    <scope>NUCLEOTIDE SEQUENCE [LARGE SCALE GENOMIC DNA]</scope>
    <source>
        <strain>U112</strain>
    </source>
</reference>
<feature type="chain" id="PRO_1000013741" description="tRNA uridine(34) hydroxylase">
    <location>
        <begin position="1"/>
        <end position="329"/>
    </location>
</feature>
<feature type="domain" description="Rhodanese" evidence="1">
    <location>
        <begin position="123"/>
        <end position="217"/>
    </location>
</feature>
<feature type="region of interest" description="Disordered" evidence="2">
    <location>
        <begin position="310"/>
        <end position="329"/>
    </location>
</feature>
<feature type="compositionally biased region" description="Basic and acidic residues" evidence="2">
    <location>
        <begin position="317"/>
        <end position="329"/>
    </location>
</feature>
<feature type="active site" description="Cysteine persulfide intermediate" evidence="1">
    <location>
        <position position="177"/>
    </location>
</feature>